<protein>
    <recommendedName>
        <fullName>Chaperone protein dnaJ 6</fullName>
        <shortName>AtDjC6</shortName>
        <shortName>AtJ6</shortName>
    </recommendedName>
</protein>
<reference key="1">
    <citation type="journal article" date="2000" name="Plant Sci.">
        <title>AtJ6, a unique J-domain protein from Arabidopsis thaliana.</title>
        <authorList>
            <person name="Krocynska B."/>
            <person name="Coop N.E."/>
            <person name="Miernyk J.A."/>
        </authorList>
    </citation>
    <scope>NUCLEOTIDE SEQUENCE [MRNA]</scope>
    <scope>TISSUE SPECIFICITY</scope>
</reference>
<reference key="2">
    <citation type="journal article" date="1998" name="DNA Res.">
        <title>Structural analysis of Arabidopsis thaliana chromosome 5. V. Sequence features of the regions of 1,381,565 bp covered by twenty one physically assigned P1 and TAC clones.</title>
        <authorList>
            <person name="Kaneko T."/>
            <person name="Kotani H."/>
            <person name="Nakamura Y."/>
            <person name="Sato S."/>
            <person name="Asamizu E."/>
            <person name="Miyajima N."/>
            <person name="Tabata S."/>
        </authorList>
    </citation>
    <scope>NUCLEOTIDE SEQUENCE [LARGE SCALE GENOMIC DNA]</scope>
    <source>
        <strain>cv. Columbia</strain>
    </source>
</reference>
<reference key="3">
    <citation type="journal article" date="2017" name="Plant J.">
        <title>Araport11: a complete reannotation of the Arabidopsis thaliana reference genome.</title>
        <authorList>
            <person name="Cheng C.Y."/>
            <person name="Krishnakumar V."/>
            <person name="Chan A.P."/>
            <person name="Thibaud-Nissen F."/>
            <person name="Schobel S."/>
            <person name="Town C.D."/>
        </authorList>
    </citation>
    <scope>GENOME REANNOTATION</scope>
    <source>
        <strain>cv. Columbia</strain>
    </source>
</reference>
<reference key="4">
    <citation type="journal article" date="2003" name="Science">
        <title>Empirical analysis of transcriptional activity in the Arabidopsis genome.</title>
        <authorList>
            <person name="Yamada K."/>
            <person name="Lim J."/>
            <person name="Dale J.M."/>
            <person name="Chen H."/>
            <person name="Shinn P."/>
            <person name="Palm C.J."/>
            <person name="Southwick A.M."/>
            <person name="Wu H.C."/>
            <person name="Kim C.J."/>
            <person name="Nguyen M."/>
            <person name="Pham P.K."/>
            <person name="Cheuk R.F."/>
            <person name="Karlin-Newmann G."/>
            <person name="Liu S.X."/>
            <person name="Lam B."/>
            <person name="Sakano H."/>
            <person name="Wu T."/>
            <person name="Yu G."/>
            <person name="Miranda M."/>
            <person name="Quach H.L."/>
            <person name="Tripp M."/>
            <person name="Chang C.H."/>
            <person name="Lee J.M."/>
            <person name="Toriumi M.J."/>
            <person name="Chan M.M."/>
            <person name="Tang C.C."/>
            <person name="Onodera C.S."/>
            <person name="Deng J.M."/>
            <person name="Akiyama K."/>
            <person name="Ansari Y."/>
            <person name="Arakawa T."/>
            <person name="Banh J."/>
            <person name="Banno F."/>
            <person name="Bowser L."/>
            <person name="Brooks S.Y."/>
            <person name="Carninci P."/>
            <person name="Chao Q."/>
            <person name="Choy N."/>
            <person name="Enju A."/>
            <person name="Goldsmith A.D."/>
            <person name="Gurjal M."/>
            <person name="Hansen N.F."/>
            <person name="Hayashizaki Y."/>
            <person name="Johnson-Hopson C."/>
            <person name="Hsuan V.W."/>
            <person name="Iida K."/>
            <person name="Karnes M."/>
            <person name="Khan S."/>
            <person name="Koesema E."/>
            <person name="Ishida J."/>
            <person name="Jiang P.X."/>
            <person name="Jones T."/>
            <person name="Kawai J."/>
            <person name="Kamiya A."/>
            <person name="Meyers C."/>
            <person name="Nakajima M."/>
            <person name="Narusaka M."/>
            <person name="Seki M."/>
            <person name="Sakurai T."/>
            <person name="Satou M."/>
            <person name="Tamse R."/>
            <person name="Vaysberg M."/>
            <person name="Wallender E.K."/>
            <person name="Wong C."/>
            <person name="Yamamura Y."/>
            <person name="Yuan S."/>
            <person name="Shinozaki K."/>
            <person name="Davis R.W."/>
            <person name="Theologis A."/>
            <person name="Ecker J.R."/>
        </authorList>
    </citation>
    <scope>NUCLEOTIDE SEQUENCE [LARGE SCALE MRNA]</scope>
    <source>
        <strain>cv. Columbia</strain>
    </source>
</reference>
<reference key="5">
    <citation type="journal article" date="2001" name="Cell Stress Chaperones">
        <title>The J-domain proteins of Arabidopsis thaliana: an unexpectedly large and diverse family of chaperones.</title>
        <authorList>
            <person name="Miernyk J.A."/>
        </authorList>
    </citation>
    <scope>GENE FAMILY</scope>
    <scope>NOMENCLATURE</scope>
</reference>
<gene>
    <name type="primary">ATJ6</name>
    <name type="synonym">C6</name>
    <name type="synonym">J6</name>
    <name type="ordered locus">At5g06910</name>
    <name type="ORF">MOJ9.8</name>
</gene>
<evidence type="ECO:0000250" key="1"/>
<evidence type="ECO:0000255" key="2"/>
<evidence type="ECO:0000255" key="3">
    <source>
        <dbReference type="PROSITE-ProRule" id="PRU00286"/>
    </source>
</evidence>
<evidence type="ECO:0000256" key="4">
    <source>
        <dbReference type="SAM" id="MobiDB-lite"/>
    </source>
</evidence>
<evidence type="ECO:0000269" key="5">
    <source ref="1"/>
</evidence>
<evidence type="ECO:0000305" key="6"/>
<dbReference type="EMBL" id="AF037168">
    <property type="protein sequence ID" value="AAB91418.1"/>
    <property type="molecule type" value="mRNA"/>
</dbReference>
<dbReference type="EMBL" id="AB010697">
    <property type="protein sequence ID" value="BAB11149.1"/>
    <property type="molecule type" value="Genomic_DNA"/>
</dbReference>
<dbReference type="EMBL" id="CP002688">
    <property type="protein sequence ID" value="AED91081.1"/>
    <property type="molecule type" value="Genomic_DNA"/>
</dbReference>
<dbReference type="EMBL" id="BT006202">
    <property type="protein sequence ID" value="AAP12851.1"/>
    <property type="molecule type" value="mRNA"/>
</dbReference>
<dbReference type="RefSeq" id="NP_196308.1">
    <property type="nucleotide sequence ID" value="NM_120773.4"/>
</dbReference>
<dbReference type="SMR" id="Q9FL54"/>
<dbReference type="BioGRID" id="15861">
    <property type="interactions" value="1"/>
</dbReference>
<dbReference type="FunCoup" id="Q9FL54">
    <property type="interactions" value="4069"/>
</dbReference>
<dbReference type="STRING" id="3702.Q9FL54"/>
<dbReference type="iPTMnet" id="Q9FL54"/>
<dbReference type="PaxDb" id="3702-AT5G06910.1"/>
<dbReference type="ProteomicsDB" id="221871"/>
<dbReference type="EnsemblPlants" id="AT5G06910.1">
    <property type="protein sequence ID" value="AT5G06910.1"/>
    <property type="gene ID" value="AT5G06910"/>
</dbReference>
<dbReference type="GeneID" id="830582"/>
<dbReference type="Gramene" id="AT5G06910.1">
    <property type="protein sequence ID" value="AT5G06910.1"/>
    <property type="gene ID" value="AT5G06910"/>
</dbReference>
<dbReference type="KEGG" id="ath:AT5G06910"/>
<dbReference type="Araport" id="AT5G06910"/>
<dbReference type="TAIR" id="AT5G06910">
    <property type="gene designation" value="ATJ6"/>
</dbReference>
<dbReference type="eggNOG" id="KOG0719">
    <property type="taxonomic scope" value="Eukaryota"/>
</dbReference>
<dbReference type="HOGENOM" id="CLU_055868_2_1_1"/>
<dbReference type="InParanoid" id="Q9FL54"/>
<dbReference type="OMA" id="KMHPDRP"/>
<dbReference type="OrthoDB" id="445556at2759"/>
<dbReference type="PhylomeDB" id="Q9FL54"/>
<dbReference type="CD-CODE" id="4299E36E">
    <property type="entry name" value="Nucleolus"/>
</dbReference>
<dbReference type="PRO" id="PR:Q9FL54"/>
<dbReference type="Proteomes" id="UP000006548">
    <property type="component" value="Chromosome 5"/>
</dbReference>
<dbReference type="ExpressionAtlas" id="Q9FL54">
    <property type="expression patterns" value="baseline and differential"/>
</dbReference>
<dbReference type="GO" id="GO:0005634">
    <property type="term" value="C:nucleus"/>
    <property type="evidence" value="ECO:0007669"/>
    <property type="project" value="UniProtKB-SubCell"/>
</dbReference>
<dbReference type="CDD" id="cd06257">
    <property type="entry name" value="DnaJ"/>
    <property type="match status" value="1"/>
</dbReference>
<dbReference type="Gene3D" id="1.10.287.110">
    <property type="entry name" value="DnaJ domain"/>
    <property type="match status" value="1"/>
</dbReference>
<dbReference type="InterPro" id="IPR042977">
    <property type="entry name" value="AtJ6-like"/>
</dbReference>
<dbReference type="InterPro" id="IPR001623">
    <property type="entry name" value="DnaJ_domain"/>
</dbReference>
<dbReference type="InterPro" id="IPR056453">
    <property type="entry name" value="HTH_DNAJC9"/>
</dbReference>
<dbReference type="InterPro" id="IPR036869">
    <property type="entry name" value="J_dom_sf"/>
</dbReference>
<dbReference type="PANTHER" id="PTHR44916">
    <property type="entry name" value="CHAPERONE DNAJ-DOMAIN SUPERFAMILY PROTEIN-RELATED"/>
    <property type="match status" value="1"/>
</dbReference>
<dbReference type="PANTHER" id="PTHR44916:SF1">
    <property type="entry name" value="CHAPERONE DNAJ-DOMAIN SUPERFAMILY PROTEIN-RELATED"/>
    <property type="match status" value="1"/>
</dbReference>
<dbReference type="Pfam" id="PF00226">
    <property type="entry name" value="DnaJ"/>
    <property type="match status" value="1"/>
</dbReference>
<dbReference type="Pfam" id="PF23302">
    <property type="entry name" value="HTH_DNAJC9"/>
    <property type="match status" value="1"/>
</dbReference>
<dbReference type="PRINTS" id="PR00625">
    <property type="entry name" value="JDOMAIN"/>
</dbReference>
<dbReference type="SMART" id="SM00271">
    <property type="entry name" value="DnaJ"/>
    <property type="match status" value="1"/>
</dbReference>
<dbReference type="SUPFAM" id="SSF46565">
    <property type="entry name" value="Chaperone J-domain"/>
    <property type="match status" value="1"/>
</dbReference>
<dbReference type="PROSITE" id="PS50076">
    <property type="entry name" value="DNAJ_2"/>
    <property type="match status" value="1"/>
</dbReference>
<sequence>MGRKKKSRASTTEEDEIEMDNAGPSSETSLYEVLGVERRATSQEIRKAYHKLALKLHPDKNQDDKEAKDKFQQLQKVISILGDEEKRAVYDQTGSIDDADIPGDAFENLRDFFRDMYKKVNEADIEEFEANYRGSESEKKDLLELFNKFKGKMNRLFCSMLCSDPKLDSHRFKDMLDEAIAAGEVKSSKAYEKWANKISETKPPTSPLRKRKKKKSAAKDSETDLCLMIAKRQEERKGKVDSMFSSLISRYGGDAEAEPTEEEFEAAQRRIESKRKPSKKSRGK</sequence>
<organism>
    <name type="scientific">Arabidopsis thaliana</name>
    <name type="common">Mouse-ear cress</name>
    <dbReference type="NCBI Taxonomy" id="3702"/>
    <lineage>
        <taxon>Eukaryota</taxon>
        <taxon>Viridiplantae</taxon>
        <taxon>Streptophyta</taxon>
        <taxon>Embryophyta</taxon>
        <taxon>Tracheophyta</taxon>
        <taxon>Spermatophyta</taxon>
        <taxon>Magnoliopsida</taxon>
        <taxon>eudicotyledons</taxon>
        <taxon>Gunneridae</taxon>
        <taxon>Pentapetalae</taxon>
        <taxon>rosids</taxon>
        <taxon>malvids</taxon>
        <taxon>Brassicales</taxon>
        <taxon>Brassicaceae</taxon>
        <taxon>Camelineae</taxon>
        <taxon>Arabidopsis</taxon>
    </lineage>
</organism>
<feature type="chain" id="PRO_0000071080" description="Chaperone protein dnaJ 6">
    <location>
        <begin position="1"/>
        <end position="284"/>
    </location>
</feature>
<feature type="domain" description="J" evidence="3">
    <location>
        <begin position="29"/>
        <end position="94"/>
    </location>
</feature>
<feature type="region of interest" description="Disordered" evidence="4">
    <location>
        <begin position="1"/>
        <end position="30"/>
    </location>
</feature>
<feature type="region of interest" description="Disordered" evidence="4">
    <location>
        <begin position="196"/>
        <end position="221"/>
    </location>
</feature>
<feature type="region of interest" description="Disordered" evidence="4">
    <location>
        <begin position="252"/>
        <end position="284"/>
    </location>
</feature>
<feature type="short sequence motif" description="Nuclear localization signal" evidence="2">
    <location>
        <begin position="3"/>
        <end position="6"/>
    </location>
</feature>
<feature type="short sequence motif" description="Nuclear localization signal" evidence="2">
    <location>
        <begin position="209"/>
        <end position="215"/>
    </location>
</feature>
<feature type="compositionally biased region" description="Acidic residues" evidence="4">
    <location>
        <begin position="255"/>
        <end position="265"/>
    </location>
</feature>
<feature type="compositionally biased region" description="Basic and acidic residues" evidence="4">
    <location>
        <begin position="266"/>
        <end position="275"/>
    </location>
</feature>
<feature type="sequence conflict" description="In Ref. 1; AAB91418." evidence="6" ref="1">
    <original>N</original>
    <variation>T</variation>
    <location>
        <position position="121"/>
    </location>
</feature>
<feature type="sequence conflict" description="In Ref. 1; AAB91418." evidence="6" ref="1">
    <original>N</original>
    <variation>T</variation>
    <location>
        <position position="131"/>
    </location>
</feature>
<feature type="sequence conflict" description="In Ref. 1; AAB91418." evidence="6" ref="1">
    <original>A</original>
    <variation>P</variation>
    <location>
        <position position="218"/>
    </location>
</feature>
<feature type="sequence conflict" description="In Ref. 1; AAB91418." evidence="6" ref="1">
    <original>A</original>
    <variation>S</variation>
    <location>
        <position position="267"/>
    </location>
</feature>
<feature type="sequence conflict" description="In Ref. 1; AAB91418." evidence="6" ref="1">
    <original>SK</original>
    <variation>TQ</variation>
    <location>
        <begin position="273"/>
        <end position="274"/>
    </location>
</feature>
<name>DNAJ6_ARATH</name>
<comment type="function">
    <text evidence="1">Plays a continuous role in plant development probably in the structural organization of compartments.</text>
</comment>
<comment type="subcellular location">
    <subcellularLocation>
        <location evidence="6">Nucleus</location>
    </subcellularLocation>
</comment>
<comment type="tissue specificity">
    <text evidence="5">Highly expressed in leaves, flowers and siliques, and to lower extent in roots.</text>
</comment>
<comment type="similarity">
    <text evidence="6">Belongs to the DnaJ family. C/III subfamily.</text>
</comment>
<accession>Q9FL54</accession>
<accession>O49070</accession>
<proteinExistence type="evidence at transcript level"/>
<keyword id="KW-0143">Chaperone</keyword>
<keyword id="KW-0539">Nucleus</keyword>
<keyword id="KW-1185">Reference proteome</keyword>